<sequence length="975" mass="110168">MEVTEANLQLLAGYLQQTLSADPNVRRPAEKLLESTELQQNYPILLLNLIDKAQMDMTTRVAGAIAFKNYIKRNWAAHLDSDGPDRIHESDRNTIKTLIVTLMLHSPVALQKQLSDAVSIIGKYDFPKKWPQLIDEMVERFASGDFNVINGVLQTAHSLFKRYRYEFKSQALWEEIKFVLDRMAKPLTDLLQAKMQLTKVHENNAGALKVIYGSLVLVNKVFFSLNSQDLPEFFEDNINTWMGAFIQQLAADVPSLRTADDEDAGVLEHLRAQVCENICLYAKKYDEEFKPFMEQFVTAVWELLVKTSLHTKYDSLVSHALQFLSVVADRQHYQSIFENPEILAQICDKVVIPNLDIRPSDEEIFEDSPEEYIRRDIEGSDIDTRRRAACDLVKTLSINFEQKIFGIFGQYLERLLTKYKENPATNWRSKDTAIYLVTSWASRGGTQKHGITQTSELVPLPEFCAQQIIPELERPNINEFPVLKAAAIKYVMVFRSILGPQVLASCLPQLIRHLPAESSVVHSYAACSVEKILSMRDASNAIVFGPQILAPYTTELISGLFATLSLPGSGENEYVMKAIMRSFSVLQSAAMPFMGVALPRLTEILTQVAKNPSRPQFNHYLFETLALCIKIVCHADSSAVSSFEEALFPVFQGILQQDIVEFMPYVFQMLSVLLEMREGTGTIPEPYWALFPCLLSPALWDRTGNVTPLIRLISAFIKQGSAQIQALGKLSGILGIFQKMIASKANDHEGFYLLQNLLSYYPPAEIQTNLRQIFGLLFQRLSLSKTPKYLSGIIIFFSFYVIKFSGSQMAQLIDEIQPNLFGMLLDRVFITEMGKIPKEQDRKMVAVGVTKLLTETPEILQQQYATFWPRLLHSLIDLFERPPEKLMGLEIGETAGVAEDPDAGYQVAFAQLTHAQPNQQDHLAEIKDARQFLATSLSKFAQARAGEFSTLLSPLEPEYKQVLQKYCDQAGVRIA</sequence>
<organism>
    <name type="scientific">Drosophila melanogaster</name>
    <name type="common">Fruit fly</name>
    <dbReference type="NCBI Taxonomy" id="7227"/>
    <lineage>
        <taxon>Eukaryota</taxon>
        <taxon>Metazoa</taxon>
        <taxon>Ecdysozoa</taxon>
        <taxon>Arthropoda</taxon>
        <taxon>Hexapoda</taxon>
        <taxon>Insecta</taxon>
        <taxon>Pterygota</taxon>
        <taxon>Neoptera</taxon>
        <taxon>Endopterygota</taxon>
        <taxon>Diptera</taxon>
        <taxon>Brachycera</taxon>
        <taxon>Muscomorpha</taxon>
        <taxon>Ephydroidea</taxon>
        <taxon>Drosophilidae</taxon>
        <taxon>Drosophila</taxon>
        <taxon>Sophophora</taxon>
    </lineage>
</organism>
<proteinExistence type="evidence at transcript level"/>
<reference key="1">
    <citation type="journal article" date="2002" name="Dev. Biol.">
        <title>Dcas is required for importin-alpha3 nuclear export and mechano-sensory organ cell fate specification in Drosophila.</title>
        <authorList>
            <person name="Tekotte H."/>
            <person name="Berdnik D."/>
            <person name="Toeroek T."/>
            <person name="Buszczak M."/>
            <person name="Jones L.M."/>
            <person name="Cooley L."/>
            <person name="Knoblich J.A."/>
            <person name="Davis I."/>
        </authorList>
    </citation>
    <scope>NUCLEOTIDE SEQUENCE [MRNA]</scope>
</reference>
<reference key="2">
    <citation type="journal article" date="2000" name="Science">
        <title>The genome sequence of Drosophila melanogaster.</title>
        <authorList>
            <person name="Adams M.D."/>
            <person name="Celniker S.E."/>
            <person name="Holt R.A."/>
            <person name="Evans C.A."/>
            <person name="Gocayne J.D."/>
            <person name="Amanatides P.G."/>
            <person name="Scherer S.E."/>
            <person name="Li P.W."/>
            <person name="Hoskins R.A."/>
            <person name="Galle R.F."/>
            <person name="George R.A."/>
            <person name="Lewis S.E."/>
            <person name="Richards S."/>
            <person name="Ashburner M."/>
            <person name="Henderson S.N."/>
            <person name="Sutton G.G."/>
            <person name="Wortman J.R."/>
            <person name="Yandell M.D."/>
            <person name="Zhang Q."/>
            <person name="Chen L.X."/>
            <person name="Brandon R.C."/>
            <person name="Rogers Y.-H.C."/>
            <person name="Blazej R.G."/>
            <person name="Champe M."/>
            <person name="Pfeiffer B.D."/>
            <person name="Wan K.H."/>
            <person name="Doyle C."/>
            <person name="Baxter E.G."/>
            <person name="Helt G."/>
            <person name="Nelson C.R."/>
            <person name="Miklos G.L.G."/>
            <person name="Abril J.F."/>
            <person name="Agbayani A."/>
            <person name="An H.-J."/>
            <person name="Andrews-Pfannkoch C."/>
            <person name="Baldwin D."/>
            <person name="Ballew R.M."/>
            <person name="Basu A."/>
            <person name="Baxendale J."/>
            <person name="Bayraktaroglu L."/>
            <person name="Beasley E.M."/>
            <person name="Beeson K.Y."/>
            <person name="Benos P.V."/>
            <person name="Berman B.P."/>
            <person name="Bhandari D."/>
            <person name="Bolshakov S."/>
            <person name="Borkova D."/>
            <person name="Botchan M.R."/>
            <person name="Bouck J."/>
            <person name="Brokstein P."/>
            <person name="Brottier P."/>
            <person name="Burtis K.C."/>
            <person name="Busam D.A."/>
            <person name="Butler H."/>
            <person name="Cadieu E."/>
            <person name="Center A."/>
            <person name="Chandra I."/>
            <person name="Cherry J.M."/>
            <person name="Cawley S."/>
            <person name="Dahlke C."/>
            <person name="Davenport L.B."/>
            <person name="Davies P."/>
            <person name="de Pablos B."/>
            <person name="Delcher A."/>
            <person name="Deng Z."/>
            <person name="Mays A.D."/>
            <person name="Dew I."/>
            <person name="Dietz S.M."/>
            <person name="Dodson K."/>
            <person name="Doup L.E."/>
            <person name="Downes M."/>
            <person name="Dugan-Rocha S."/>
            <person name="Dunkov B.C."/>
            <person name="Dunn P."/>
            <person name="Durbin K.J."/>
            <person name="Evangelista C.C."/>
            <person name="Ferraz C."/>
            <person name="Ferriera S."/>
            <person name="Fleischmann W."/>
            <person name="Fosler C."/>
            <person name="Gabrielian A.E."/>
            <person name="Garg N.S."/>
            <person name="Gelbart W.M."/>
            <person name="Glasser K."/>
            <person name="Glodek A."/>
            <person name="Gong F."/>
            <person name="Gorrell J.H."/>
            <person name="Gu Z."/>
            <person name="Guan P."/>
            <person name="Harris M."/>
            <person name="Harris N.L."/>
            <person name="Harvey D.A."/>
            <person name="Heiman T.J."/>
            <person name="Hernandez J.R."/>
            <person name="Houck J."/>
            <person name="Hostin D."/>
            <person name="Houston K.A."/>
            <person name="Howland T.J."/>
            <person name="Wei M.-H."/>
            <person name="Ibegwam C."/>
            <person name="Jalali M."/>
            <person name="Kalush F."/>
            <person name="Karpen G.H."/>
            <person name="Ke Z."/>
            <person name="Kennison J.A."/>
            <person name="Ketchum K.A."/>
            <person name="Kimmel B.E."/>
            <person name="Kodira C.D."/>
            <person name="Kraft C.L."/>
            <person name="Kravitz S."/>
            <person name="Kulp D."/>
            <person name="Lai Z."/>
            <person name="Lasko P."/>
            <person name="Lei Y."/>
            <person name="Levitsky A.A."/>
            <person name="Li J.H."/>
            <person name="Li Z."/>
            <person name="Liang Y."/>
            <person name="Lin X."/>
            <person name="Liu X."/>
            <person name="Mattei B."/>
            <person name="McIntosh T.C."/>
            <person name="McLeod M.P."/>
            <person name="McPherson D."/>
            <person name="Merkulov G."/>
            <person name="Milshina N.V."/>
            <person name="Mobarry C."/>
            <person name="Morris J."/>
            <person name="Moshrefi A."/>
            <person name="Mount S.M."/>
            <person name="Moy M."/>
            <person name="Murphy B."/>
            <person name="Murphy L."/>
            <person name="Muzny D.M."/>
            <person name="Nelson D.L."/>
            <person name="Nelson D.R."/>
            <person name="Nelson K.A."/>
            <person name="Nixon K."/>
            <person name="Nusskern D.R."/>
            <person name="Pacleb J.M."/>
            <person name="Palazzolo M."/>
            <person name="Pittman G.S."/>
            <person name="Pan S."/>
            <person name="Pollard J."/>
            <person name="Puri V."/>
            <person name="Reese M.G."/>
            <person name="Reinert K."/>
            <person name="Remington K."/>
            <person name="Saunders R.D.C."/>
            <person name="Scheeler F."/>
            <person name="Shen H."/>
            <person name="Shue B.C."/>
            <person name="Siden-Kiamos I."/>
            <person name="Simpson M."/>
            <person name="Skupski M.P."/>
            <person name="Smith T.J."/>
            <person name="Spier E."/>
            <person name="Spradling A.C."/>
            <person name="Stapleton M."/>
            <person name="Strong R."/>
            <person name="Sun E."/>
            <person name="Svirskas R."/>
            <person name="Tector C."/>
            <person name="Turner R."/>
            <person name="Venter E."/>
            <person name="Wang A.H."/>
            <person name="Wang X."/>
            <person name="Wang Z.-Y."/>
            <person name="Wassarman D.A."/>
            <person name="Weinstock G.M."/>
            <person name="Weissenbach J."/>
            <person name="Williams S.M."/>
            <person name="Woodage T."/>
            <person name="Worley K.C."/>
            <person name="Wu D."/>
            <person name="Yang S."/>
            <person name="Yao Q.A."/>
            <person name="Ye J."/>
            <person name="Yeh R.-F."/>
            <person name="Zaveri J.S."/>
            <person name="Zhan M."/>
            <person name="Zhang G."/>
            <person name="Zhao Q."/>
            <person name="Zheng L."/>
            <person name="Zheng X.H."/>
            <person name="Zhong F.N."/>
            <person name="Zhong W."/>
            <person name="Zhou X."/>
            <person name="Zhu S.C."/>
            <person name="Zhu X."/>
            <person name="Smith H.O."/>
            <person name="Gibbs R.A."/>
            <person name="Myers E.W."/>
            <person name="Rubin G.M."/>
            <person name="Venter J.C."/>
        </authorList>
    </citation>
    <scope>NUCLEOTIDE SEQUENCE [LARGE SCALE GENOMIC DNA]</scope>
    <source>
        <strain>Berkeley</strain>
    </source>
</reference>
<reference key="3">
    <citation type="journal article" date="2002" name="Genome Biol.">
        <title>Annotation of the Drosophila melanogaster euchromatic genome: a systematic review.</title>
        <authorList>
            <person name="Misra S."/>
            <person name="Crosby M.A."/>
            <person name="Mungall C.J."/>
            <person name="Matthews B.B."/>
            <person name="Campbell K.S."/>
            <person name="Hradecky P."/>
            <person name="Huang Y."/>
            <person name="Kaminker J.S."/>
            <person name="Millburn G.H."/>
            <person name="Prochnik S.E."/>
            <person name="Smith C.D."/>
            <person name="Tupy J.L."/>
            <person name="Whitfield E.J."/>
            <person name="Bayraktaroglu L."/>
            <person name="Berman B.P."/>
            <person name="Bettencourt B.R."/>
            <person name="Celniker S.E."/>
            <person name="de Grey A.D.N.J."/>
            <person name="Drysdale R.A."/>
            <person name="Harris N.L."/>
            <person name="Richter J."/>
            <person name="Russo S."/>
            <person name="Schroeder A.J."/>
            <person name="Shu S.Q."/>
            <person name="Stapleton M."/>
            <person name="Yamada C."/>
            <person name="Ashburner M."/>
            <person name="Gelbart W.M."/>
            <person name="Rubin G.M."/>
            <person name="Lewis S.E."/>
        </authorList>
    </citation>
    <scope>GENOME REANNOTATION</scope>
    <source>
        <strain>Berkeley</strain>
    </source>
</reference>
<reference key="4">
    <citation type="journal article" date="2000" name="Science">
        <title>A Drosophila complementary DNA resource.</title>
        <authorList>
            <person name="Rubin G.M."/>
            <person name="Hong L."/>
            <person name="Brokstein P."/>
            <person name="Evans-Holm M."/>
            <person name="Frise E."/>
            <person name="Stapleton M."/>
            <person name="Harvey D.A."/>
        </authorList>
    </citation>
    <scope>NUCLEOTIDE SEQUENCE [LARGE SCALE MRNA]</scope>
    <source>
        <strain>Berkeley</strain>
        <tissue>Embryo</tissue>
    </source>
</reference>
<comment type="function">
    <text evidence="1">Export receptor for importin alpha. Mediates importin-alpha re-export from the nucleus to the cytoplasm after import substrates have been released into the nucleoplasm (By similarity).</text>
</comment>
<comment type="subunit">
    <text evidence="1">Binds with high affinity to importin-alpha only in the presence of RanGTP.</text>
</comment>
<comment type="subcellular location">
    <subcellularLocation>
        <location evidence="1">Cytoplasm</location>
    </subcellularLocation>
    <subcellularLocation>
        <location evidence="1">Nucleus</location>
    </subcellularLocation>
</comment>
<comment type="similarity">
    <text evidence="4">Belongs to the XPO2/CSE1 family.</text>
</comment>
<name>XPO2_DROME</name>
<feature type="chain" id="PRO_0000117290" description="Exportin-2">
    <location>
        <begin position="1"/>
        <end position="975"/>
    </location>
</feature>
<feature type="domain" description="Importin N-terminal" evidence="2">
    <location>
        <begin position="29"/>
        <end position="105"/>
    </location>
</feature>
<feature type="sequence conflict" description="In Ref. 2; AAF53575." evidence="4" ref="2">
    <original>K</original>
    <variation>T</variation>
    <location>
        <position position="194"/>
    </location>
</feature>
<feature type="sequence conflict" description="In Ref. 1; CAB42967." evidence="4" ref="1">
    <original>Q</original>
    <variation>P</variation>
    <location>
        <position position="331"/>
    </location>
</feature>
<feature type="sequence conflict" description="In Ref. 1; CAB42967." evidence="4" ref="1">
    <original>AA</original>
    <variation>GR</variation>
    <location>
        <begin position="589"/>
        <end position="590"/>
    </location>
</feature>
<evidence type="ECO:0000250" key="1"/>
<evidence type="ECO:0000255" key="2">
    <source>
        <dbReference type="PROSITE-ProRule" id="PRU00115"/>
    </source>
</evidence>
<evidence type="ECO:0000303" key="3">
    <source>
    </source>
</evidence>
<evidence type="ECO:0000305" key="4"/>
<evidence type="ECO:0000312" key="5">
    <source>
        <dbReference type="FlyBase" id="FBgn0022213"/>
    </source>
</evidence>
<keyword id="KW-0963">Cytoplasm</keyword>
<keyword id="KW-0539">Nucleus</keyword>
<keyword id="KW-0653">Protein transport</keyword>
<keyword id="KW-1185">Reference proteome</keyword>
<keyword id="KW-0813">Transport</keyword>
<accession>Q9XZU1</accession>
<accession>Q9UB14</accession>
<accession>Q9VJH4</accession>
<gene>
    <name evidence="5" type="primary">Cse1</name>
    <name evidence="3" type="synonym">Cas</name>
    <name evidence="5" type="ORF">CG13281</name>
</gene>
<protein>
    <recommendedName>
        <fullName>Exportin-2</fullName>
        <shortName>Exp2</shortName>
    </recommendedName>
    <alternativeName>
        <fullName>Cellular apoptosis susceptibility protein homolog</fullName>
    </alternativeName>
    <alternativeName>
        <fullName>Chromosome segregation protein 1</fullName>
    </alternativeName>
    <alternativeName>
        <fullName evidence="4">Importin-alpha re-exporter</fullName>
    </alternativeName>
</protein>
<dbReference type="EMBL" id="AJ238857">
    <property type="protein sequence ID" value="CAB42967.1"/>
    <property type="molecule type" value="mRNA"/>
</dbReference>
<dbReference type="EMBL" id="AE014134">
    <property type="protein sequence ID" value="AAF53575.1"/>
    <property type="molecule type" value="Genomic_DNA"/>
</dbReference>
<dbReference type="EMBL" id="AF132562">
    <property type="protein sequence ID" value="AAD27861.1"/>
    <property type="molecule type" value="mRNA"/>
</dbReference>
<dbReference type="RefSeq" id="NP_523588.2">
    <property type="nucleotide sequence ID" value="NM_078864.3"/>
</dbReference>
<dbReference type="SMR" id="Q9XZU1"/>
<dbReference type="BioGRID" id="61019">
    <property type="interactions" value="13"/>
</dbReference>
<dbReference type="FunCoup" id="Q9XZU1">
    <property type="interactions" value="2727"/>
</dbReference>
<dbReference type="IntAct" id="Q9XZU1">
    <property type="interactions" value="6"/>
</dbReference>
<dbReference type="MINT" id="Q9XZU1"/>
<dbReference type="STRING" id="7227.FBpp0080484"/>
<dbReference type="PaxDb" id="7227-FBpp0080484"/>
<dbReference type="EnsemblMetazoa" id="FBtr0080930">
    <property type="protein sequence ID" value="FBpp0080484"/>
    <property type="gene ID" value="FBgn0022213"/>
</dbReference>
<dbReference type="GeneID" id="35016"/>
<dbReference type="KEGG" id="dme:Dmel_CG13281"/>
<dbReference type="AGR" id="FB:FBgn0022213"/>
<dbReference type="CTD" id="35016"/>
<dbReference type="FlyBase" id="FBgn0022213">
    <property type="gene designation" value="Cse1"/>
</dbReference>
<dbReference type="VEuPathDB" id="VectorBase:FBgn0022213"/>
<dbReference type="eggNOG" id="KOG1992">
    <property type="taxonomic scope" value="Eukaryota"/>
</dbReference>
<dbReference type="GeneTree" id="ENSGT00550000074884"/>
<dbReference type="HOGENOM" id="CLU_009614_0_0_1"/>
<dbReference type="InParanoid" id="Q9XZU1"/>
<dbReference type="OrthoDB" id="3268246at2759"/>
<dbReference type="PhylomeDB" id="Q9XZU1"/>
<dbReference type="SignaLink" id="Q9XZU1"/>
<dbReference type="ChiTaRS" id="caz">
    <property type="organism name" value="fly"/>
</dbReference>
<dbReference type="GenomeRNAi" id="35016"/>
<dbReference type="PRO" id="PR:Q9XZU1"/>
<dbReference type="Proteomes" id="UP000000803">
    <property type="component" value="Chromosome 2L"/>
</dbReference>
<dbReference type="Bgee" id="FBgn0022213">
    <property type="expression patterns" value="Expressed in eye disc (Drosophila) and 98 other cell types or tissues"/>
</dbReference>
<dbReference type="GO" id="GO:0005829">
    <property type="term" value="C:cytosol"/>
    <property type="evidence" value="ECO:0007005"/>
    <property type="project" value="FlyBase"/>
</dbReference>
<dbReference type="GO" id="GO:0005635">
    <property type="term" value="C:nuclear envelope"/>
    <property type="evidence" value="ECO:0007005"/>
    <property type="project" value="FlyBase"/>
</dbReference>
<dbReference type="GO" id="GO:0005654">
    <property type="term" value="C:nucleoplasm"/>
    <property type="evidence" value="ECO:0007005"/>
    <property type="project" value="FlyBase"/>
</dbReference>
<dbReference type="GO" id="GO:0005049">
    <property type="term" value="F:nuclear export signal receptor activity"/>
    <property type="evidence" value="ECO:0000318"/>
    <property type="project" value="GO_Central"/>
</dbReference>
<dbReference type="GO" id="GO:0031267">
    <property type="term" value="F:small GTPase binding"/>
    <property type="evidence" value="ECO:0007669"/>
    <property type="project" value="InterPro"/>
</dbReference>
<dbReference type="GO" id="GO:0006611">
    <property type="term" value="P:protein export from nucleus"/>
    <property type="evidence" value="ECO:0000315"/>
    <property type="project" value="FlyBase"/>
</dbReference>
<dbReference type="GO" id="GO:0006606">
    <property type="term" value="P:protein import into nucleus"/>
    <property type="evidence" value="ECO:0000318"/>
    <property type="project" value="GO_Central"/>
</dbReference>
<dbReference type="FunFam" id="1.25.10.10:FF:000057">
    <property type="entry name" value="Exportin-2 isoform 1"/>
    <property type="match status" value="1"/>
</dbReference>
<dbReference type="Gene3D" id="1.25.10.10">
    <property type="entry name" value="Leucine-rich Repeat Variant"/>
    <property type="match status" value="1"/>
</dbReference>
<dbReference type="InterPro" id="IPR011989">
    <property type="entry name" value="ARM-like"/>
</dbReference>
<dbReference type="InterPro" id="IPR016024">
    <property type="entry name" value="ARM-type_fold"/>
</dbReference>
<dbReference type="InterPro" id="IPR001494">
    <property type="entry name" value="Importin-beta_N"/>
</dbReference>
<dbReference type="InterPro" id="IPR005043">
    <property type="entry name" value="XPO2_C"/>
</dbReference>
<dbReference type="InterPro" id="IPR013713">
    <property type="entry name" value="XPO2_central"/>
</dbReference>
<dbReference type="PANTHER" id="PTHR10997:SF8">
    <property type="entry name" value="EXPORTIN-2"/>
    <property type="match status" value="1"/>
</dbReference>
<dbReference type="PANTHER" id="PTHR10997">
    <property type="entry name" value="IMPORTIN-7, 8, 11"/>
    <property type="match status" value="1"/>
</dbReference>
<dbReference type="Pfam" id="PF03378">
    <property type="entry name" value="CAS_CSE1"/>
    <property type="match status" value="1"/>
</dbReference>
<dbReference type="Pfam" id="PF08506">
    <property type="entry name" value="Cse1"/>
    <property type="match status" value="1"/>
</dbReference>
<dbReference type="Pfam" id="PF03810">
    <property type="entry name" value="IBN_N"/>
    <property type="match status" value="1"/>
</dbReference>
<dbReference type="SMART" id="SM00913">
    <property type="entry name" value="IBN_N"/>
    <property type="match status" value="1"/>
</dbReference>
<dbReference type="SUPFAM" id="SSF48371">
    <property type="entry name" value="ARM repeat"/>
    <property type="match status" value="1"/>
</dbReference>
<dbReference type="PROSITE" id="PS50166">
    <property type="entry name" value="IMPORTIN_B_NT"/>
    <property type="match status" value="1"/>
</dbReference>